<gene>
    <name evidence="1" type="primary">atpB</name>
</gene>
<comment type="function">
    <text evidence="1">Produces ATP from ADP in the presence of a proton gradient across the membrane. The catalytic sites are hosted primarily by the beta subunits.</text>
</comment>
<comment type="catalytic activity">
    <reaction evidence="1">
        <text>ATP + H2O + 4 H(+)(in) = ADP + phosphate + 5 H(+)(out)</text>
        <dbReference type="Rhea" id="RHEA:57720"/>
        <dbReference type="ChEBI" id="CHEBI:15377"/>
        <dbReference type="ChEBI" id="CHEBI:15378"/>
        <dbReference type="ChEBI" id="CHEBI:30616"/>
        <dbReference type="ChEBI" id="CHEBI:43474"/>
        <dbReference type="ChEBI" id="CHEBI:456216"/>
        <dbReference type="EC" id="7.1.2.2"/>
    </reaction>
</comment>
<comment type="subunit">
    <text evidence="1">F-type ATPases have 2 components, CF(1) - the catalytic core - and CF(0) - the membrane proton channel. CF(1) has five subunits: alpha(3), beta(3), gamma(1), delta(1), epsilon(1). CF(0) has four main subunits: a(1), b(1), b'(1) and c(9-12).</text>
</comment>
<comment type="subcellular location">
    <subcellularLocation>
        <location evidence="1">Plastid</location>
        <location evidence="1">Chloroplast thylakoid membrane</location>
        <topology evidence="1">Peripheral membrane protein</topology>
    </subcellularLocation>
</comment>
<comment type="similarity">
    <text evidence="1">Belongs to the ATPase alpha/beta chains family.</text>
</comment>
<sequence length="490" mass="52863">MRSNPTTSGSEVSAVEKKNLGRIVKIIGPVLDVAFPPGKMPNIYNALVVQGRDNEQTNVTCEVQQLLGNNRVRAVAMSDTNGLMRGMEVINTGAPISVPVGGSTLGRIFNVLGQPVDNLGPVDTNTTSPIHRSAPAFIQLDTKLSIFETGIKVVDLLAPYRRGGKIGLFGGAGVGKTVLIMELINNIAKAHGGVSVFGGVGERTREGNDLYMEMKESGVINEENIAESKVALVYGQMNEPPGARMRVGLTALTMAEYFRDVNEQDVLLFIDNIFRFVQAGSEVSALLGRMPSAVGYQPTLSTEMGTLQERITSTKEGSITSIQAVYVPADDLTDPAPATTFAHLDATTVLSRGLAAKGIYPAVDPLDSTSTMLQPRIVGEEHYETAQRVKQTLQRYKELQDIIAILGLDELSEEDRLTVARARKIERFLSQPFFVAEVFTGSPGKYVGLAETIRGFQLILSGELDGLPEQAFYLVGNIDEATAKAMNLKT</sequence>
<name>ATPB_CALSE</name>
<feature type="chain" id="PRO_0000254453" description="ATP synthase subunit beta, chloroplastic">
    <location>
        <begin position="1"/>
        <end position="490"/>
    </location>
</feature>
<feature type="binding site" evidence="1">
    <location>
        <begin position="170"/>
        <end position="177"/>
    </location>
    <ligand>
        <name>ATP</name>
        <dbReference type="ChEBI" id="CHEBI:30616"/>
    </ligand>
</feature>
<proteinExistence type="inferred from homology"/>
<accession>Q8MBM4</accession>
<organism>
    <name type="scientific">Calystegia sepium</name>
    <name type="common">Hedge bindweed</name>
    <name type="synonym">Convolvulus sepium</name>
    <dbReference type="NCBI Taxonomy" id="47519"/>
    <lineage>
        <taxon>Eukaryota</taxon>
        <taxon>Viridiplantae</taxon>
        <taxon>Streptophyta</taxon>
        <taxon>Embryophyta</taxon>
        <taxon>Tracheophyta</taxon>
        <taxon>Spermatophyta</taxon>
        <taxon>Magnoliopsida</taxon>
        <taxon>eudicotyledons</taxon>
        <taxon>Gunneridae</taxon>
        <taxon>Pentapetalae</taxon>
        <taxon>asterids</taxon>
        <taxon>lamiids</taxon>
        <taxon>Solanales</taxon>
        <taxon>Convolvulaceae</taxon>
        <taxon>Convolvuleae</taxon>
        <taxon>Calystegia</taxon>
    </lineage>
</organism>
<keyword id="KW-0066">ATP synthesis</keyword>
<keyword id="KW-0067">ATP-binding</keyword>
<keyword id="KW-0139">CF(1)</keyword>
<keyword id="KW-0150">Chloroplast</keyword>
<keyword id="KW-0375">Hydrogen ion transport</keyword>
<keyword id="KW-0406">Ion transport</keyword>
<keyword id="KW-0472">Membrane</keyword>
<keyword id="KW-0547">Nucleotide-binding</keyword>
<keyword id="KW-0934">Plastid</keyword>
<keyword id="KW-0793">Thylakoid</keyword>
<keyword id="KW-1278">Translocase</keyword>
<keyword id="KW-0813">Transport</keyword>
<geneLocation type="chloroplast"/>
<reference key="1">
    <citation type="journal article" date="2002" name="Am. J. Bot.">
        <title>Monophyly of the Convolvulaceae and circumscription of their major lineages based on DNA sequences of multiple chloroplast loci.</title>
        <authorList>
            <person name="Stefanovic S."/>
            <person name="Krueger L."/>
            <person name="Olmstead R.G."/>
        </authorList>
        <dbReference type="AGRICOLA" id="IND23320510"/>
    </citation>
    <scope>NUCLEOTIDE SEQUENCE [GENOMIC DNA]</scope>
</reference>
<evidence type="ECO:0000255" key="1">
    <source>
        <dbReference type="HAMAP-Rule" id="MF_01347"/>
    </source>
</evidence>
<protein>
    <recommendedName>
        <fullName evidence="1">ATP synthase subunit beta, chloroplastic</fullName>
        <ecNumber evidence="1">7.1.2.2</ecNumber>
    </recommendedName>
    <alternativeName>
        <fullName evidence="1">ATP synthase F1 sector subunit beta</fullName>
    </alternativeName>
    <alternativeName>
        <fullName evidence="1">F-ATPase subunit beta</fullName>
    </alternativeName>
</protein>
<dbReference type="EC" id="7.1.2.2" evidence="1"/>
<dbReference type="EMBL" id="AY100783">
    <property type="protein sequence ID" value="AAM52137.1"/>
    <property type="molecule type" value="Genomic_DNA"/>
</dbReference>
<dbReference type="SMR" id="Q8MBM4"/>
<dbReference type="GO" id="GO:0009535">
    <property type="term" value="C:chloroplast thylakoid membrane"/>
    <property type="evidence" value="ECO:0007669"/>
    <property type="project" value="UniProtKB-SubCell"/>
</dbReference>
<dbReference type="GO" id="GO:0005739">
    <property type="term" value="C:mitochondrion"/>
    <property type="evidence" value="ECO:0007669"/>
    <property type="project" value="GOC"/>
</dbReference>
<dbReference type="GO" id="GO:0045259">
    <property type="term" value="C:proton-transporting ATP synthase complex"/>
    <property type="evidence" value="ECO:0007669"/>
    <property type="project" value="UniProtKB-KW"/>
</dbReference>
<dbReference type="GO" id="GO:0005524">
    <property type="term" value="F:ATP binding"/>
    <property type="evidence" value="ECO:0007669"/>
    <property type="project" value="UniProtKB-UniRule"/>
</dbReference>
<dbReference type="GO" id="GO:0016887">
    <property type="term" value="F:ATP hydrolysis activity"/>
    <property type="evidence" value="ECO:0007669"/>
    <property type="project" value="InterPro"/>
</dbReference>
<dbReference type="GO" id="GO:0046933">
    <property type="term" value="F:proton-transporting ATP synthase activity, rotational mechanism"/>
    <property type="evidence" value="ECO:0007669"/>
    <property type="project" value="UniProtKB-UniRule"/>
</dbReference>
<dbReference type="GO" id="GO:0042776">
    <property type="term" value="P:proton motive force-driven mitochondrial ATP synthesis"/>
    <property type="evidence" value="ECO:0007669"/>
    <property type="project" value="TreeGrafter"/>
</dbReference>
<dbReference type="CDD" id="cd18110">
    <property type="entry name" value="ATP-synt_F1_beta_C"/>
    <property type="match status" value="1"/>
</dbReference>
<dbReference type="CDD" id="cd18115">
    <property type="entry name" value="ATP-synt_F1_beta_N"/>
    <property type="match status" value="1"/>
</dbReference>
<dbReference type="CDD" id="cd01133">
    <property type="entry name" value="F1-ATPase_beta_CD"/>
    <property type="match status" value="1"/>
</dbReference>
<dbReference type="FunFam" id="1.10.1140.10:FF:000001">
    <property type="entry name" value="ATP synthase subunit beta"/>
    <property type="match status" value="1"/>
</dbReference>
<dbReference type="FunFam" id="3.40.50.12240:FF:000006">
    <property type="entry name" value="ATP synthase subunit beta"/>
    <property type="match status" value="1"/>
</dbReference>
<dbReference type="FunFam" id="3.40.50.300:FF:000004">
    <property type="entry name" value="ATP synthase subunit beta"/>
    <property type="match status" value="1"/>
</dbReference>
<dbReference type="FunFam" id="2.40.10.170:FF:000002">
    <property type="entry name" value="ATP synthase subunit beta, chloroplastic"/>
    <property type="match status" value="1"/>
</dbReference>
<dbReference type="Gene3D" id="2.40.10.170">
    <property type="match status" value="1"/>
</dbReference>
<dbReference type="Gene3D" id="1.10.1140.10">
    <property type="entry name" value="Bovine Mitochondrial F1-atpase, Atp Synthase Beta Chain, Chain D, domain 3"/>
    <property type="match status" value="1"/>
</dbReference>
<dbReference type="Gene3D" id="3.40.50.300">
    <property type="entry name" value="P-loop containing nucleotide triphosphate hydrolases"/>
    <property type="match status" value="1"/>
</dbReference>
<dbReference type="HAMAP" id="MF_01347">
    <property type="entry name" value="ATP_synth_beta_bact"/>
    <property type="match status" value="1"/>
</dbReference>
<dbReference type="InterPro" id="IPR003593">
    <property type="entry name" value="AAA+_ATPase"/>
</dbReference>
<dbReference type="InterPro" id="IPR055190">
    <property type="entry name" value="ATP-synt_VA_C"/>
</dbReference>
<dbReference type="InterPro" id="IPR005722">
    <property type="entry name" value="ATP_synth_F1_bsu"/>
</dbReference>
<dbReference type="InterPro" id="IPR020003">
    <property type="entry name" value="ATPase_a/bsu_AS"/>
</dbReference>
<dbReference type="InterPro" id="IPR050053">
    <property type="entry name" value="ATPase_alpha/beta_chains"/>
</dbReference>
<dbReference type="InterPro" id="IPR004100">
    <property type="entry name" value="ATPase_F1/V1/A1_a/bsu_N"/>
</dbReference>
<dbReference type="InterPro" id="IPR036121">
    <property type="entry name" value="ATPase_F1/V1/A1_a/bsu_N_sf"/>
</dbReference>
<dbReference type="InterPro" id="IPR000194">
    <property type="entry name" value="ATPase_F1/V1/A1_a/bsu_nucl-bd"/>
</dbReference>
<dbReference type="InterPro" id="IPR024034">
    <property type="entry name" value="ATPase_F1/V1_b/a_C"/>
</dbReference>
<dbReference type="InterPro" id="IPR027417">
    <property type="entry name" value="P-loop_NTPase"/>
</dbReference>
<dbReference type="NCBIfam" id="TIGR01039">
    <property type="entry name" value="atpD"/>
    <property type="match status" value="1"/>
</dbReference>
<dbReference type="PANTHER" id="PTHR15184">
    <property type="entry name" value="ATP SYNTHASE"/>
    <property type="match status" value="1"/>
</dbReference>
<dbReference type="PANTHER" id="PTHR15184:SF71">
    <property type="entry name" value="ATP SYNTHASE SUBUNIT BETA, MITOCHONDRIAL"/>
    <property type="match status" value="1"/>
</dbReference>
<dbReference type="Pfam" id="PF00006">
    <property type="entry name" value="ATP-synt_ab"/>
    <property type="match status" value="1"/>
</dbReference>
<dbReference type="Pfam" id="PF02874">
    <property type="entry name" value="ATP-synt_ab_N"/>
    <property type="match status" value="1"/>
</dbReference>
<dbReference type="Pfam" id="PF22919">
    <property type="entry name" value="ATP-synt_VA_C"/>
    <property type="match status" value="1"/>
</dbReference>
<dbReference type="SMART" id="SM00382">
    <property type="entry name" value="AAA"/>
    <property type="match status" value="1"/>
</dbReference>
<dbReference type="SUPFAM" id="SSF47917">
    <property type="entry name" value="C-terminal domain of alpha and beta subunits of F1 ATP synthase"/>
    <property type="match status" value="1"/>
</dbReference>
<dbReference type="SUPFAM" id="SSF50615">
    <property type="entry name" value="N-terminal domain of alpha and beta subunits of F1 ATP synthase"/>
    <property type="match status" value="1"/>
</dbReference>
<dbReference type="SUPFAM" id="SSF52540">
    <property type="entry name" value="P-loop containing nucleoside triphosphate hydrolases"/>
    <property type="match status" value="1"/>
</dbReference>
<dbReference type="PROSITE" id="PS00152">
    <property type="entry name" value="ATPASE_ALPHA_BETA"/>
    <property type="match status" value="1"/>
</dbReference>